<reference key="1">
    <citation type="submission" date="2008-04" db="EMBL/GenBank/DDBJ databases">
        <title>Complete sequence of Yersinia pseudotuberculosis PB1/+.</title>
        <authorList>
            <person name="Copeland A."/>
            <person name="Lucas S."/>
            <person name="Lapidus A."/>
            <person name="Glavina del Rio T."/>
            <person name="Dalin E."/>
            <person name="Tice H."/>
            <person name="Bruce D."/>
            <person name="Goodwin L."/>
            <person name="Pitluck S."/>
            <person name="Munk A.C."/>
            <person name="Brettin T."/>
            <person name="Detter J.C."/>
            <person name="Han C."/>
            <person name="Tapia R."/>
            <person name="Schmutz J."/>
            <person name="Larimer F."/>
            <person name="Land M."/>
            <person name="Hauser L."/>
            <person name="Challacombe J.F."/>
            <person name="Green L."/>
            <person name="Lindler L.E."/>
            <person name="Nikolich M.P."/>
            <person name="Richardson P."/>
        </authorList>
    </citation>
    <scope>NUCLEOTIDE SEQUENCE [LARGE SCALE GENOMIC DNA]</scope>
    <source>
        <strain>PB1/+</strain>
    </source>
</reference>
<proteinExistence type="inferred from homology"/>
<keyword id="KW-0240">DNA-directed RNA polymerase</keyword>
<keyword id="KW-0548">Nucleotidyltransferase</keyword>
<keyword id="KW-0804">Transcription</keyword>
<keyword id="KW-0808">Transferase</keyword>
<gene>
    <name evidence="1" type="primary">rpoZ</name>
    <name type="ordered locus">YPTS_0037</name>
</gene>
<accession>B2JYM2</accession>
<organism>
    <name type="scientific">Yersinia pseudotuberculosis serotype IB (strain PB1/+)</name>
    <dbReference type="NCBI Taxonomy" id="502801"/>
    <lineage>
        <taxon>Bacteria</taxon>
        <taxon>Pseudomonadati</taxon>
        <taxon>Pseudomonadota</taxon>
        <taxon>Gammaproteobacteria</taxon>
        <taxon>Enterobacterales</taxon>
        <taxon>Yersiniaceae</taxon>
        <taxon>Yersinia</taxon>
    </lineage>
</organism>
<comment type="function">
    <text evidence="1">Promotes RNA polymerase assembly. Latches the N- and C-terminal regions of the beta' subunit thereby facilitating its interaction with the beta and alpha subunits.</text>
</comment>
<comment type="catalytic activity">
    <reaction evidence="1">
        <text>RNA(n) + a ribonucleoside 5'-triphosphate = RNA(n+1) + diphosphate</text>
        <dbReference type="Rhea" id="RHEA:21248"/>
        <dbReference type="Rhea" id="RHEA-COMP:14527"/>
        <dbReference type="Rhea" id="RHEA-COMP:17342"/>
        <dbReference type="ChEBI" id="CHEBI:33019"/>
        <dbReference type="ChEBI" id="CHEBI:61557"/>
        <dbReference type="ChEBI" id="CHEBI:140395"/>
        <dbReference type="EC" id="2.7.7.6"/>
    </reaction>
</comment>
<comment type="subunit">
    <text evidence="1">The RNAP catalytic core consists of 2 alpha, 1 beta, 1 beta' and 1 omega subunit. When a sigma factor is associated with the core the holoenzyme is formed, which can initiate transcription.</text>
</comment>
<comment type="similarity">
    <text evidence="1">Belongs to the RNA polymerase subunit omega family.</text>
</comment>
<name>RPOZ_YERPB</name>
<sequence length="91" mass="10165">MARVTVQDAVEKIGNRFDLVLVAARRARQIQSGGKDALVPEENDKVTVIALREIEEGLITNQILDVRERQEQQEQEAAEIQAVTAIAEGRR</sequence>
<protein>
    <recommendedName>
        <fullName evidence="1">DNA-directed RNA polymerase subunit omega</fullName>
        <shortName evidence="1">RNAP omega subunit</shortName>
        <ecNumber evidence="1">2.7.7.6</ecNumber>
    </recommendedName>
    <alternativeName>
        <fullName evidence="1">RNA polymerase omega subunit</fullName>
    </alternativeName>
    <alternativeName>
        <fullName evidence="1">Transcriptase subunit omega</fullName>
    </alternativeName>
</protein>
<evidence type="ECO:0000255" key="1">
    <source>
        <dbReference type="HAMAP-Rule" id="MF_00366"/>
    </source>
</evidence>
<dbReference type="EC" id="2.7.7.6" evidence="1"/>
<dbReference type="EMBL" id="CP001048">
    <property type="protein sequence ID" value="ACC87036.1"/>
    <property type="molecule type" value="Genomic_DNA"/>
</dbReference>
<dbReference type="RefSeq" id="WP_004392061.1">
    <property type="nucleotide sequence ID" value="NZ_CP009780.1"/>
</dbReference>
<dbReference type="SMR" id="B2JYM2"/>
<dbReference type="GeneID" id="97458311"/>
<dbReference type="KEGG" id="ypb:YPTS_0037"/>
<dbReference type="PATRIC" id="fig|502801.10.peg.3714"/>
<dbReference type="GO" id="GO:0000428">
    <property type="term" value="C:DNA-directed RNA polymerase complex"/>
    <property type="evidence" value="ECO:0007669"/>
    <property type="project" value="UniProtKB-KW"/>
</dbReference>
<dbReference type="GO" id="GO:0003677">
    <property type="term" value="F:DNA binding"/>
    <property type="evidence" value="ECO:0007669"/>
    <property type="project" value="UniProtKB-UniRule"/>
</dbReference>
<dbReference type="GO" id="GO:0003899">
    <property type="term" value="F:DNA-directed RNA polymerase activity"/>
    <property type="evidence" value="ECO:0007669"/>
    <property type="project" value="UniProtKB-UniRule"/>
</dbReference>
<dbReference type="GO" id="GO:0006351">
    <property type="term" value="P:DNA-templated transcription"/>
    <property type="evidence" value="ECO:0007669"/>
    <property type="project" value="UniProtKB-UniRule"/>
</dbReference>
<dbReference type="FunFam" id="3.90.940.10:FF:000001">
    <property type="entry name" value="DNA-directed RNA polymerase subunit omega"/>
    <property type="match status" value="1"/>
</dbReference>
<dbReference type="Gene3D" id="3.90.940.10">
    <property type="match status" value="1"/>
</dbReference>
<dbReference type="HAMAP" id="MF_00366">
    <property type="entry name" value="RNApol_bact_RpoZ"/>
    <property type="match status" value="1"/>
</dbReference>
<dbReference type="InterPro" id="IPR003716">
    <property type="entry name" value="DNA-dir_RNA_pol_omega"/>
</dbReference>
<dbReference type="InterPro" id="IPR006110">
    <property type="entry name" value="Pol_omega/Rpo6/RPB6"/>
</dbReference>
<dbReference type="InterPro" id="IPR036161">
    <property type="entry name" value="RPB6/omega-like_sf"/>
</dbReference>
<dbReference type="NCBIfam" id="TIGR00690">
    <property type="entry name" value="rpoZ"/>
    <property type="match status" value="1"/>
</dbReference>
<dbReference type="PANTHER" id="PTHR34476">
    <property type="entry name" value="DNA-DIRECTED RNA POLYMERASE SUBUNIT OMEGA"/>
    <property type="match status" value="1"/>
</dbReference>
<dbReference type="PANTHER" id="PTHR34476:SF1">
    <property type="entry name" value="DNA-DIRECTED RNA POLYMERASE SUBUNIT OMEGA"/>
    <property type="match status" value="1"/>
</dbReference>
<dbReference type="Pfam" id="PF01192">
    <property type="entry name" value="RNA_pol_Rpb6"/>
    <property type="match status" value="1"/>
</dbReference>
<dbReference type="SMART" id="SM01409">
    <property type="entry name" value="RNA_pol_Rpb6"/>
    <property type="match status" value="1"/>
</dbReference>
<dbReference type="SUPFAM" id="SSF63562">
    <property type="entry name" value="RPB6/omega subunit-like"/>
    <property type="match status" value="1"/>
</dbReference>
<feature type="chain" id="PRO_1000121293" description="DNA-directed RNA polymerase subunit omega">
    <location>
        <begin position="1"/>
        <end position="91"/>
    </location>
</feature>